<name>RS24_BOVIN</name>
<reference key="1">
    <citation type="submission" date="2005-01" db="EMBL/GenBank/DDBJ databases">
        <title>Analysis of sequences obtained from constructed full-length bovine cDNA libraries.</title>
        <authorList>
            <person name="Yu J."/>
            <person name="Meng Y."/>
            <person name="Wang Z."/>
            <person name="Hansen C."/>
            <person name="Li C."/>
            <person name="Moore S.S."/>
        </authorList>
    </citation>
    <scope>NUCLEOTIDE SEQUENCE [LARGE SCALE MRNA] (ISOFORM 2)</scope>
    <source>
        <tissue>Lymphoid epithelium</tissue>
    </source>
</reference>
<reference key="2">
    <citation type="submission" date="2005-08" db="EMBL/GenBank/DDBJ databases">
        <authorList>
            <consortium name="NIH - Mammalian Gene Collection (MGC) project"/>
        </authorList>
    </citation>
    <scope>NUCLEOTIDE SEQUENCE [LARGE SCALE MRNA] (ISOFORM 1)</scope>
    <source>
        <strain>Hereford</strain>
        <tissue>Rumen reticulum</tissue>
    </source>
</reference>
<feature type="chain" id="PRO_0000231010" description="Small ribosomal subunit protein eS24">
    <location>
        <begin position="1"/>
        <end position="131"/>
    </location>
</feature>
<feature type="region of interest" description="Disordered" evidence="2">
    <location>
        <begin position="90"/>
        <end position="131"/>
    </location>
</feature>
<feature type="compositionally biased region" description="Basic and acidic residues" evidence="2">
    <location>
        <begin position="90"/>
        <end position="100"/>
    </location>
</feature>
<feature type="compositionally biased region" description="Basic residues" evidence="2">
    <location>
        <begin position="101"/>
        <end position="119"/>
    </location>
</feature>
<feature type="modified residue" description="N-acetylmethionine" evidence="1">
    <location>
        <position position="1"/>
    </location>
</feature>
<feature type="modified residue" description="Phosphothreonine" evidence="1">
    <location>
        <position position="9"/>
    </location>
</feature>
<feature type="cross-link" description="Glycyl lysine isopeptide (Lys-Gly) (interchain with G-Cter in SUMO2)" evidence="1">
    <location>
        <position position="37"/>
    </location>
</feature>
<feature type="splice variant" id="VSP_017835" description="In isoform 2." evidence="3">
    <location>
        <position position="131"/>
    </location>
</feature>
<dbReference type="EMBL" id="AY911383">
    <property type="protein sequence ID" value="AAW82146.1"/>
    <property type="molecule type" value="mRNA"/>
</dbReference>
<dbReference type="EMBL" id="BC103133">
    <property type="protein sequence ID" value="AAI03134.1"/>
    <property type="molecule type" value="mRNA"/>
</dbReference>
<dbReference type="RefSeq" id="NP_001020510.1">
    <molecule id="Q56JU9-2"/>
    <property type="nucleotide sequence ID" value="NM_001025339.2"/>
</dbReference>
<dbReference type="RefSeq" id="XP_005226462.1">
    <property type="nucleotide sequence ID" value="XM_005226405.3"/>
</dbReference>
<dbReference type="RefSeq" id="XP_005226463.1">
    <molecule id="Q56JU9-1"/>
    <property type="nucleotide sequence ID" value="XM_005226406.5"/>
</dbReference>
<dbReference type="RefSeq" id="XP_059738524.1">
    <molecule id="Q56JU9-2"/>
    <property type="nucleotide sequence ID" value="XM_059882541.1"/>
</dbReference>
<dbReference type="RefSeq" id="XP_059738525.1">
    <molecule id="Q56JU9-2"/>
    <property type="nucleotide sequence ID" value="XM_059882542.1"/>
</dbReference>
<dbReference type="RefSeq" id="XP_059738526.1">
    <molecule id="Q56JU9-2"/>
    <property type="nucleotide sequence ID" value="XM_059882543.1"/>
</dbReference>
<dbReference type="SMR" id="Q56JU9"/>
<dbReference type="FunCoup" id="Q56JU9">
    <property type="interactions" value="2727"/>
</dbReference>
<dbReference type="STRING" id="9913.ENSBTAP00000060315"/>
<dbReference type="PaxDb" id="9913-ENSBTAP00000043937"/>
<dbReference type="PeptideAtlas" id="Q56JU9"/>
<dbReference type="Ensembl" id="ENSBTAT00000046662.2">
    <molecule id="Q56JU9-2"/>
    <property type="protein sequence ID" value="ENSBTAP00000043937.1"/>
    <property type="gene ID" value="ENSBTAG00000013264.6"/>
</dbReference>
<dbReference type="Ensembl" id="ENSBTAT00000073736.2">
    <molecule id="Q56JU9-1"/>
    <property type="protein sequence ID" value="ENSBTAP00000060315.1"/>
    <property type="gene ID" value="ENSBTAG00000013264.6"/>
</dbReference>
<dbReference type="GeneID" id="530464"/>
<dbReference type="KEGG" id="bta:530464"/>
<dbReference type="CTD" id="6229"/>
<dbReference type="VEuPathDB" id="HostDB:ENSBTAG00000013264"/>
<dbReference type="eggNOG" id="KOG3424">
    <property type="taxonomic scope" value="Eukaryota"/>
</dbReference>
<dbReference type="GeneTree" id="ENSGT00390000000153"/>
<dbReference type="HOGENOM" id="CLU_107248_1_0_1"/>
<dbReference type="InParanoid" id="Q56JU9"/>
<dbReference type="OMA" id="IRVKKYM"/>
<dbReference type="OrthoDB" id="5571754at2759"/>
<dbReference type="TreeFam" id="TF314134"/>
<dbReference type="Reactome" id="R-BTA-156827">
    <property type="pathway name" value="L13a-mediated translational silencing of Ceruloplasmin expression"/>
</dbReference>
<dbReference type="Reactome" id="R-BTA-1799339">
    <property type="pathway name" value="SRP-dependent cotranslational protein targeting to membrane"/>
</dbReference>
<dbReference type="Reactome" id="R-BTA-6791226">
    <property type="pathway name" value="Major pathway of rRNA processing in the nucleolus and cytosol"/>
</dbReference>
<dbReference type="Reactome" id="R-BTA-72649">
    <property type="pathway name" value="Translation initiation complex formation"/>
</dbReference>
<dbReference type="Reactome" id="R-BTA-72689">
    <property type="pathway name" value="Formation of a pool of free 40S subunits"/>
</dbReference>
<dbReference type="Reactome" id="R-BTA-72695">
    <property type="pathway name" value="Formation of the ternary complex, and subsequently, the 43S complex"/>
</dbReference>
<dbReference type="Reactome" id="R-BTA-72702">
    <property type="pathway name" value="Ribosomal scanning and start codon recognition"/>
</dbReference>
<dbReference type="Reactome" id="R-BTA-72706">
    <property type="pathway name" value="GTP hydrolysis and joining of the 60S ribosomal subunit"/>
</dbReference>
<dbReference type="Reactome" id="R-BTA-975956">
    <property type="pathway name" value="Nonsense Mediated Decay (NMD) independent of the Exon Junction Complex (EJC)"/>
</dbReference>
<dbReference type="Reactome" id="R-BTA-975957">
    <property type="pathway name" value="Nonsense Mediated Decay (NMD) enhanced by the Exon Junction Complex (EJC)"/>
</dbReference>
<dbReference type="Proteomes" id="UP000009136">
    <property type="component" value="Chromosome 28"/>
</dbReference>
<dbReference type="Bgee" id="ENSBTAG00000013264">
    <property type="expression patterns" value="Expressed in isthmus of fallopian tube and 103 other cell types or tissues"/>
</dbReference>
<dbReference type="GO" id="GO:0005737">
    <property type="term" value="C:cytoplasm"/>
    <property type="evidence" value="ECO:0007669"/>
    <property type="project" value="UniProtKB-SubCell"/>
</dbReference>
<dbReference type="GO" id="GO:0005730">
    <property type="term" value="C:nucleolus"/>
    <property type="evidence" value="ECO:0007669"/>
    <property type="project" value="UniProtKB-SubCell"/>
</dbReference>
<dbReference type="GO" id="GO:0044391">
    <property type="term" value="C:ribosomal subunit"/>
    <property type="evidence" value="ECO:0007669"/>
    <property type="project" value="UniProtKB-ARBA"/>
</dbReference>
<dbReference type="GO" id="GO:0032040">
    <property type="term" value="C:small-subunit processome"/>
    <property type="evidence" value="ECO:0000250"/>
    <property type="project" value="UniProtKB"/>
</dbReference>
<dbReference type="GO" id="GO:0003735">
    <property type="term" value="F:structural constituent of ribosome"/>
    <property type="evidence" value="ECO:0007669"/>
    <property type="project" value="InterPro"/>
</dbReference>
<dbReference type="GO" id="GO:0042274">
    <property type="term" value="P:ribosomal small subunit biogenesis"/>
    <property type="evidence" value="ECO:0000250"/>
    <property type="project" value="UniProtKB"/>
</dbReference>
<dbReference type="GO" id="GO:0006412">
    <property type="term" value="P:translation"/>
    <property type="evidence" value="ECO:0007669"/>
    <property type="project" value="InterPro"/>
</dbReference>
<dbReference type="FunFam" id="3.30.70.3370:FF:000001">
    <property type="entry name" value="40S ribosomal protein S24"/>
    <property type="match status" value="1"/>
</dbReference>
<dbReference type="Gene3D" id="3.30.70.3370">
    <property type="match status" value="1"/>
</dbReference>
<dbReference type="HAMAP" id="MF_00545">
    <property type="entry name" value="Ribosomal_eS24"/>
    <property type="match status" value="1"/>
</dbReference>
<dbReference type="InterPro" id="IPR053709">
    <property type="entry name" value="eRP_eS24_sf"/>
</dbReference>
<dbReference type="InterPro" id="IPR001976">
    <property type="entry name" value="Ribosomal_eS24"/>
</dbReference>
<dbReference type="InterPro" id="IPR018098">
    <property type="entry name" value="Ribosomal_eS24_CS"/>
</dbReference>
<dbReference type="InterPro" id="IPR012678">
    <property type="entry name" value="Ribosomal_uL23/eL15/eS24_sf"/>
</dbReference>
<dbReference type="PANTHER" id="PTHR10496">
    <property type="entry name" value="40S RIBOSOMAL PROTEIN S24"/>
    <property type="match status" value="1"/>
</dbReference>
<dbReference type="Pfam" id="PF01282">
    <property type="entry name" value="Ribosomal_S24e"/>
    <property type="match status" value="1"/>
</dbReference>
<dbReference type="SUPFAM" id="SSF54189">
    <property type="entry name" value="Ribosomal proteins S24e, L23 and L15e"/>
    <property type="match status" value="1"/>
</dbReference>
<dbReference type="PROSITE" id="PS00529">
    <property type="entry name" value="RIBOSOMAL_S24E"/>
    <property type="match status" value="1"/>
</dbReference>
<proteinExistence type="evidence at transcript level"/>
<keyword id="KW-0007">Acetylation</keyword>
<keyword id="KW-0025">Alternative splicing</keyword>
<keyword id="KW-0963">Cytoplasm</keyword>
<keyword id="KW-1017">Isopeptide bond</keyword>
<keyword id="KW-0539">Nucleus</keyword>
<keyword id="KW-0597">Phosphoprotein</keyword>
<keyword id="KW-1185">Reference proteome</keyword>
<keyword id="KW-0687">Ribonucleoprotein</keyword>
<keyword id="KW-0689">Ribosomal protein</keyword>
<keyword id="KW-0832">Ubl conjugation</keyword>
<protein>
    <recommendedName>
        <fullName evidence="4">Small ribosomal subunit protein eS24</fullName>
    </recommendedName>
    <alternativeName>
        <fullName>40S ribosomal protein S24</fullName>
    </alternativeName>
</protein>
<gene>
    <name type="primary">RPS24</name>
</gene>
<comment type="function">
    <text evidence="1">Component of the small ribosomal subunit. The ribosome is a large ribonucleoprotein complex responsible for the synthesis of proteins in the cell. Required for processing of pre-rRNA and maturation of 40S ribosomal subunits. Part of the small subunit (SSU) processome, first precursor of the small eukaryotic ribosomal subunit. During the assembly of the SSU processome in the nucleolus, many ribosome biogenesis factors, an RNA chaperone and ribosomal proteins associate with the nascent pre-rRNA and work in concert to generate RNA folding, modifications, rearrangements and cleavage as well as targeted degradation of pre-ribosomal RNA by the RNA exosome.</text>
</comment>
<comment type="subunit">
    <text evidence="1">Component of the small ribosomal subunit. Part of the small subunit (SSU) processome, composed of more than 70 proteins and the RNA chaperone small nucleolar RNA (snoRNA) U3.</text>
</comment>
<comment type="subcellular location">
    <subcellularLocation>
        <location evidence="1">Cytoplasm</location>
    </subcellularLocation>
    <subcellularLocation>
        <location evidence="1">Nucleus</location>
        <location evidence="1">Nucleolus</location>
    </subcellularLocation>
</comment>
<comment type="alternative products">
    <event type="alternative splicing"/>
    <isoform>
        <id>Q56JU9-1</id>
        <name>1</name>
        <sequence type="displayed"/>
    </isoform>
    <isoform>
        <id>Q56JU9-2</id>
        <name>2</name>
        <sequence type="described" ref="VSP_017835"/>
    </isoform>
</comment>
<comment type="similarity">
    <text evidence="4">Belongs to the eukaryotic ribosomal protein eS24 family.</text>
</comment>
<evidence type="ECO:0000250" key="1">
    <source>
        <dbReference type="UniProtKB" id="P62847"/>
    </source>
</evidence>
<evidence type="ECO:0000256" key="2">
    <source>
        <dbReference type="SAM" id="MobiDB-lite"/>
    </source>
</evidence>
<evidence type="ECO:0000303" key="3">
    <source ref="1"/>
</evidence>
<evidence type="ECO:0000305" key="4"/>
<sequence length="131" mass="15197">MNDTVTIRTRKFMTNRLLQRKQMVIDVLHPGKATVPKTEIREKLAKMYKTTPDVIFVFGFRTHFGGGKTTGFGMIYDSLDYAKKNEPKHRLARHGLYEKKKTSRKQRKERKNRMKKVRGTAKANVGAGKKK</sequence>
<organism>
    <name type="scientific">Bos taurus</name>
    <name type="common">Bovine</name>
    <dbReference type="NCBI Taxonomy" id="9913"/>
    <lineage>
        <taxon>Eukaryota</taxon>
        <taxon>Metazoa</taxon>
        <taxon>Chordata</taxon>
        <taxon>Craniata</taxon>
        <taxon>Vertebrata</taxon>
        <taxon>Euteleostomi</taxon>
        <taxon>Mammalia</taxon>
        <taxon>Eutheria</taxon>
        <taxon>Laurasiatheria</taxon>
        <taxon>Artiodactyla</taxon>
        <taxon>Ruminantia</taxon>
        <taxon>Pecora</taxon>
        <taxon>Bovidae</taxon>
        <taxon>Bovinae</taxon>
        <taxon>Bos</taxon>
    </lineage>
</organism>
<accession>Q56JU9</accession>
<accession>Q3SZ53</accession>